<sequence length="359" mass="39699">MSTENTLSVADLARENVRNLVPYQSARRLGGNGDVWLNANEFPTAVEFQLTQQTLNRYPECQPKAVIENYAQYAGVKPEQVLVSRGADEGIELVIRAFCEPGKDAILYCPPTYGMYSVSAETIGVERRTVPALENWQLDLQGISDNLDGTKVVFVCSPNNPTGQLINPQDLRTLLELTRGKAIVVADEAYIEFCPQATLTGWLVEYPHLVILRTLSKAFALAGLRCGFTLANEEVINLLLKVIAPYPLSTPVADIAAQALSPQGINAMRDRVAQTVQERQYLVNALQQTACVEHVFDSETNYILARFTASSSVFKSLWDQGIILRDQNKQPSLSGCLRITVGTRQENQRVIDALRAEPV</sequence>
<keyword id="KW-0028">Amino-acid biosynthesis</keyword>
<keyword id="KW-0032">Aminotransferase</keyword>
<keyword id="KW-0368">Histidine biosynthesis</keyword>
<keyword id="KW-0663">Pyridoxal phosphate</keyword>
<keyword id="KW-0808">Transferase</keyword>
<dbReference type="EC" id="2.6.1.9" evidence="1"/>
<dbReference type="EMBL" id="AM933172">
    <property type="protein sequence ID" value="CAR33651.1"/>
    <property type="molecule type" value="Genomic_DNA"/>
</dbReference>
<dbReference type="RefSeq" id="WP_000102715.1">
    <property type="nucleotide sequence ID" value="NC_011294.1"/>
</dbReference>
<dbReference type="SMR" id="B5QZL3"/>
<dbReference type="KEGG" id="set:SEN2072"/>
<dbReference type="HOGENOM" id="CLU_017584_3_1_6"/>
<dbReference type="UniPathway" id="UPA00031">
    <property type="reaction ID" value="UER00012"/>
</dbReference>
<dbReference type="Proteomes" id="UP000000613">
    <property type="component" value="Chromosome"/>
</dbReference>
<dbReference type="GO" id="GO:0004400">
    <property type="term" value="F:histidinol-phosphate transaminase activity"/>
    <property type="evidence" value="ECO:0007669"/>
    <property type="project" value="UniProtKB-UniRule"/>
</dbReference>
<dbReference type="GO" id="GO:0030170">
    <property type="term" value="F:pyridoxal phosphate binding"/>
    <property type="evidence" value="ECO:0007669"/>
    <property type="project" value="InterPro"/>
</dbReference>
<dbReference type="GO" id="GO:0000105">
    <property type="term" value="P:L-histidine biosynthetic process"/>
    <property type="evidence" value="ECO:0007669"/>
    <property type="project" value="UniProtKB-UniRule"/>
</dbReference>
<dbReference type="CDD" id="cd00609">
    <property type="entry name" value="AAT_like"/>
    <property type="match status" value="1"/>
</dbReference>
<dbReference type="FunFam" id="3.40.640.10:FF:000032">
    <property type="entry name" value="Histidinol-phosphate aminotransferase"/>
    <property type="match status" value="1"/>
</dbReference>
<dbReference type="Gene3D" id="3.90.1150.10">
    <property type="entry name" value="Aspartate Aminotransferase, domain 1"/>
    <property type="match status" value="1"/>
</dbReference>
<dbReference type="Gene3D" id="3.40.640.10">
    <property type="entry name" value="Type I PLP-dependent aspartate aminotransferase-like (Major domain)"/>
    <property type="match status" value="1"/>
</dbReference>
<dbReference type="HAMAP" id="MF_01023">
    <property type="entry name" value="HisC_aminotrans_2"/>
    <property type="match status" value="1"/>
</dbReference>
<dbReference type="InterPro" id="IPR001917">
    <property type="entry name" value="Aminotrans_II_pyridoxalP_BS"/>
</dbReference>
<dbReference type="InterPro" id="IPR004839">
    <property type="entry name" value="Aminotransferase_I/II_large"/>
</dbReference>
<dbReference type="InterPro" id="IPR005861">
    <property type="entry name" value="HisP_aminotrans"/>
</dbReference>
<dbReference type="InterPro" id="IPR015424">
    <property type="entry name" value="PyrdxlP-dep_Trfase"/>
</dbReference>
<dbReference type="InterPro" id="IPR015421">
    <property type="entry name" value="PyrdxlP-dep_Trfase_major"/>
</dbReference>
<dbReference type="InterPro" id="IPR015422">
    <property type="entry name" value="PyrdxlP-dep_Trfase_small"/>
</dbReference>
<dbReference type="NCBIfam" id="TIGR01141">
    <property type="entry name" value="hisC"/>
    <property type="match status" value="1"/>
</dbReference>
<dbReference type="PANTHER" id="PTHR42885:SF2">
    <property type="entry name" value="HISTIDINOL-PHOSPHATE AMINOTRANSFERASE"/>
    <property type="match status" value="1"/>
</dbReference>
<dbReference type="PANTHER" id="PTHR42885">
    <property type="entry name" value="HISTIDINOL-PHOSPHATE AMINOTRANSFERASE-RELATED"/>
    <property type="match status" value="1"/>
</dbReference>
<dbReference type="Pfam" id="PF00155">
    <property type="entry name" value="Aminotran_1_2"/>
    <property type="match status" value="1"/>
</dbReference>
<dbReference type="SUPFAM" id="SSF53383">
    <property type="entry name" value="PLP-dependent transferases"/>
    <property type="match status" value="1"/>
</dbReference>
<dbReference type="PROSITE" id="PS00599">
    <property type="entry name" value="AA_TRANSFER_CLASS_2"/>
    <property type="match status" value="1"/>
</dbReference>
<accession>B5QZL3</accession>
<protein>
    <recommendedName>
        <fullName evidence="1">Histidinol-phosphate aminotransferase</fullName>
        <ecNumber evidence="1">2.6.1.9</ecNumber>
    </recommendedName>
    <alternativeName>
        <fullName evidence="1">Imidazole acetol-phosphate transaminase</fullName>
    </alternativeName>
</protein>
<feature type="chain" id="PRO_1000135418" description="Histidinol-phosphate aminotransferase">
    <location>
        <begin position="1"/>
        <end position="359"/>
    </location>
</feature>
<feature type="modified residue" description="N6-(pyridoxal phosphate)lysine" evidence="1">
    <location>
        <position position="217"/>
    </location>
</feature>
<gene>
    <name evidence="1" type="primary">hisC</name>
    <name type="ordered locus">SEN2072</name>
</gene>
<name>HIS8_SALEP</name>
<organism>
    <name type="scientific">Salmonella enteritidis PT4 (strain P125109)</name>
    <dbReference type="NCBI Taxonomy" id="550537"/>
    <lineage>
        <taxon>Bacteria</taxon>
        <taxon>Pseudomonadati</taxon>
        <taxon>Pseudomonadota</taxon>
        <taxon>Gammaproteobacteria</taxon>
        <taxon>Enterobacterales</taxon>
        <taxon>Enterobacteriaceae</taxon>
        <taxon>Salmonella</taxon>
    </lineage>
</organism>
<evidence type="ECO:0000255" key="1">
    <source>
        <dbReference type="HAMAP-Rule" id="MF_01023"/>
    </source>
</evidence>
<proteinExistence type="inferred from homology"/>
<reference key="1">
    <citation type="journal article" date="2008" name="Genome Res.">
        <title>Comparative genome analysis of Salmonella enteritidis PT4 and Salmonella gallinarum 287/91 provides insights into evolutionary and host adaptation pathways.</title>
        <authorList>
            <person name="Thomson N.R."/>
            <person name="Clayton D.J."/>
            <person name="Windhorst D."/>
            <person name="Vernikos G."/>
            <person name="Davidson S."/>
            <person name="Churcher C."/>
            <person name="Quail M.A."/>
            <person name="Stevens M."/>
            <person name="Jones M.A."/>
            <person name="Watson M."/>
            <person name="Barron A."/>
            <person name="Layton A."/>
            <person name="Pickard D."/>
            <person name="Kingsley R.A."/>
            <person name="Bignell A."/>
            <person name="Clark L."/>
            <person name="Harris B."/>
            <person name="Ormond D."/>
            <person name="Abdellah Z."/>
            <person name="Brooks K."/>
            <person name="Cherevach I."/>
            <person name="Chillingworth T."/>
            <person name="Woodward J."/>
            <person name="Norberczak H."/>
            <person name="Lord A."/>
            <person name="Arrowsmith C."/>
            <person name="Jagels K."/>
            <person name="Moule S."/>
            <person name="Mungall K."/>
            <person name="Saunders M."/>
            <person name="Whitehead S."/>
            <person name="Chabalgoity J.A."/>
            <person name="Maskell D."/>
            <person name="Humphreys T."/>
            <person name="Roberts M."/>
            <person name="Barrow P.A."/>
            <person name="Dougan G."/>
            <person name="Parkhill J."/>
        </authorList>
    </citation>
    <scope>NUCLEOTIDE SEQUENCE [LARGE SCALE GENOMIC DNA]</scope>
    <source>
        <strain>P125109</strain>
    </source>
</reference>
<comment type="catalytic activity">
    <reaction evidence="1">
        <text>L-histidinol phosphate + 2-oxoglutarate = 3-(imidazol-4-yl)-2-oxopropyl phosphate + L-glutamate</text>
        <dbReference type="Rhea" id="RHEA:23744"/>
        <dbReference type="ChEBI" id="CHEBI:16810"/>
        <dbReference type="ChEBI" id="CHEBI:29985"/>
        <dbReference type="ChEBI" id="CHEBI:57766"/>
        <dbReference type="ChEBI" id="CHEBI:57980"/>
        <dbReference type="EC" id="2.6.1.9"/>
    </reaction>
</comment>
<comment type="cofactor">
    <cofactor evidence="1">
        <name>pyridoxal 5'-phosphate</name>
        <dbReference type="ChEBI" id="CHEBI:597326"/>
    </cofactor>
</comment>
<comment type="pathway">
    <text evidence="1">Amino-acid biosynthesis; L-histidine biosynthesis; L-histidine from 5-phospho-alpha-D-ribose 1-diphosphate: step 7/9.</text>
</comment>
<comment type="subunit">
    <text evidence="1">Homodimer.</text>
</comment>
<comment type="similarity">
    <text evidence="1">Belongs to the class-II pyridoxal-phosphate-dependent aminotransferase family. Histidinol-phosphate aminotransferase subfamily.</text>
</comment>